<sequence length="391" mass="42687">MRSNYLFTSESVSEGHPDKVADQISDAIVDLYLSRDPEARVACETLVTTQRIIIGGEVRSAVPVSEEEIEKTVRETVREIGYEQTGFDWRTAEFANHLHAQSADIAQGVDAGEDKDEGAGDQGIMFGFATDETPDYMPATLYYAHRILERLAEDRHQKKVDFLEPDAKSQVTLVYENGVPVRASALVLSTQHSPALSSKEGQAKLRDYVKSVYEDVLPKGWMPDDKAIFVNPTGLFEIGGPDGDAGLTGRKIIVDTYGGAAPHGGGAFSGKDPTKVDRSAAYVARYLAKNIVAAGLAKKVTIQLSYAIGVSEPLSLYVDTHGTGTVDEAKIEEVLPKLIRLTPKGIRTHLKLNKPIYKPSAAYGHFGRKADGDFFPWEKLDLVDKLKAAFA</sequence>
<protein>
    <recommendedName>
        <fullName evidence="1">S-adenosylmethionine synthase</fullName>
        <shortName evidence="1">AdoMet synthase</shortName>
        <ecNumber evidence="1">2.5.1.6</ecNumber>
    </recommendedName>
    <alternativeName>
        <fullName evidence="1">MAT</fullName>
    </alternativeName>
    <alternativeName>
        <fullName evidence="1">Methionine adenosyltransferase</fullName>
    </alternativeName>
</protein>
<gene>
    <name evidence="1" type="primary">metK</name>
    <name type="ordered locus">ZMO0273</name>
</gene>
<feature type="chain" id="PRO_0000174632" description="S-adenosylmethionine synthase">
    <location>
        <begin position="1"/>
        <end position="391"/>
    </location>
</feature>
<feature type="region of interest" description="Flexible loop" evidence="1">
    <location>
        <begin position="101"/>
        <end position="111"/>
    </location>
</feature>
<feature type="binding site" description="in other chain" evidence="1">
    <location>
        <position position="16"/>
    </location>
    <ligand>
        <name>ATP</name>
        <dbReference type="ChEBI" id="CHEBI:30616"/>
        <note>ligand shared between two neighboring subunits</note>
    </ligand>
</feature>
<feature type="binding site" evidence="1">
    <location>
        <position position="18"/>
    </location>
    <ligand>
        <name>Mg(2+)</name>
        <dbReference type="ChEBI" id="CHEBI:18420"/>
    </ligand>
</feature>
<feature type="binding site" evidence="1">
    <location>
        <position position="44"/>
    </location>
    <ligand>
        <name>K(+)</name>
        <dbReference type="ChEBI" id="CHEBI:29103"/>
    </ligand>
</feature>
<feature type="binding site" description="in other chain" evidence="1">
    <location>
        <position position="57"/>
    </location>
    <ligand>
        <name>L-methionine</name>
        <dbReference type="ChEBI" id="CHEBI:57844"/>
        <note>ligand shared between two neighboring subunits</note>
    </ligand>
</feature>
<feature type="binding site" description="in other chain" evidence="1">
    <location>
        <position position="101"/>
    </location>
    <ligand>
        <name>L-methionine</name>
        <dbReference type="ChEBI" id="CHEBI:57844"/>
        <note>ligand shared between two neighboring subunits</note>
    </ligand>
</feature>
<feature type="binding site" description="in other chain" evidence="1">
    <location>
        <begin position="166"/>
        <end position="168"/>
    </location>
    <ligand>
        <name>ATP</name>
        <dbReference type="ChEBI" id="CHEBI:30616"/>
        <note>ligand shared between two neighboring subunits</note>
    </ligand>
</feature>
<feature type="binding site" evidence="1">
    <location>
        <position position="244"/>
    </location>
    <ligand>
        <name>ATP</name>
        <dbReference type="ChEBI" id="CHEBI:30616"/>
        <note>ligand shared between two neighboring subunits</note>
    </ligand>
</feature>
<feature type="binding site" evidence="1">
    <location>
        <position position="244"/>
    </location>
    <ligand>
        <name>L-methionine</name>
        <dbReference type="ChEBI" id="CHEBI:57844"/>
        <note>ligand shared between two neighboring subunits</note>
    </ligand>
</feature>
<feature type="binding site" description="in other chain" evidence="1">
    <location>
        <begin position="250"/>
        <end position="251"/>
    </location>
    <ligand>
        <name>ATP</name>
        <dbReference type="ChEBI" id="CHEBI:30616"/>
        <note>ligand shared between two neighboring subunits</note>
    </ligand>
</feature>
<feature type="binding site" evidence="1">
    <location>
        <position position="267"/>
    </location>
    <ligand>
        <name>ATP</name>
        <dbReference type="ChEBI" id="CHEBI:30616"/>
        <note>ligand shared between two neighboring subunits</note>
    </ligand>
</feature>
<feature type="binding site" evidence="1">
    <location>
        <position position="271"/>
    </location>
    <ligand>
        <name>ATP</name>
        <dbReference type="ChEBI" id="CHEBI:30616"/>
        <note>ligand shared between two neighboring subunits</note>
    </ligand>
</feature>
<feature type="binding site" description="in other chain" evidence="1">
    <location>
        <position position="275"/>
    </location>
    <ligand>
        <name>L-methionine</name>
        <dbReference type="ChEBI" id="CHEBI:57844"/>
        <note>ligand shared between two neighboring subunits</note>
    </ligand>
</feature>
<dbReference type="EC" id="2.5.1.6" evidence="1"/>
<dbReference type="EMBL" id="AE008692">
    <property type="protein sequence ID" value="AAV88897.1"/>
    <property type="molecule type" value="Genomic_DNA"/>
</dbReference>
<dbReference type="RefSeq" id="WP_011240214.1">
    <property type="nucleotide sequence ID" value="NZ_CP035711.1"/>
</dbReference>
<dbReference type="SMR" id="Q5NQV7"/>
<dbReference type="STRING" id="264203.ZMO0273"/>
<dbReference type="GeneID" id="79904502"/>
<dbReference type="KEGG" id="zmo:ZMO0273"/>
<dbReference type="eggNOG" id="COG0192">
    <property type="taxonomic scope" value="Bacteria"/>
</dbReference>
<dbReference type="HOGENOM" id="CLU_041802_1_1_5"/>
<dbReference type="UniPathway" id="UPA00315">
    <property type="reaction ID" value="UER00080"/>
</dbReference>
<dbReference type="Proteomes" id="UP000001173">
    <property type="component" value="Chromosome"/>
</dbReference>
<dbReference type="GO" id="GO:0005737">
    <property type="term" value="C:cytoplasm"/>
    <property type="evidence" value="ECO:0007669"/>
    <property type="project" value="UniProtKB-SubCell"/>
</dbReference>
<dbReference type="GO" id="GO:0005524">
    <property type="term" value="F:ATP binding"/>
    <property type="evidence" value="ECO:0007669"/>
    <property type="project" value="UniProtKB-UniRule"/>
</dbReference>
<dbReference type="GO" id="GO:0000287">
    <property type="term" value="F:magnesium ion binding"/>
    <property type="evidence" value="ECO:0007669"/>
    <property type="project" value="UniProtKB-UniRule"/>
</dbReference>
<dbReference type="GO" id="GO:0004478">
    <property type="term" value="F:methionine adenosyltransferase activity"/>
    <property type="evidence" value="ECO:0007669"/>
    <property type="project" value="UniProtKB-UniRule"/>
</dbReference>
<dbReference type="GO" id="GO:0006730">
    <property type="term" value="P:one-carbon metabolic process"/>
    <property type="evidence" value="ECO:0007669"/>
    <property type="project" value="UniProtKB-KW"/>
</dbReference>
<dbReference type="GO" id="GO:0006556">
    <property type="term" value="P:S-adenosylmethionine biosynthetic process"/>
    <property type="evidence" value="ECO:0007669"/>
    <property type="project" value="UniProtKB-UniRule"/>
</dbReference>
<dbReference type="CDD" id="cd18079">
    <property type="entry name" value="S-AdoMet_synt"/>
    <property type="match status" value="1"/>
</dbReference>
<dbReference type="Gene3D" id="3.30.300.10">
    <property type="match status" value="3"/>
</dbReference>
<dbReference type="HAMAP" id="MF_00086">
    <property type="entry name" value="S_AdoMet_synth1"/>
    <property type="match status" value="1"/>
</dbReference>
<dbReference type="InterPro" id="IPR022631">
    <property type="entry name" value="ADOMET_SYNTHASE_CS"/>
</dbReference>
<dbReference type="InterPro" id="IPR022630">
    <property type="entry name" value="S-AdoMet_synt_C"/>
</dbReference>
<dbReference type="InterPro" id="IPR022629">
    <property type="entry name" value="S-AdoMet_synt_central"/>
</dbReference>
<dbReference type="InterPro" id="IPR022628">
    <property type="entry name" value="S-AdoMet_synt_N"/>
</dbReference>
<dbReference type="InterPro" id="IPR002133">
    <property type="entry name" value="S-AdoMet_synthetase"/>
</dbReference>
<dbReference type="InterPro" id="IPR022636">
    <property type="entry name" value="S-AdoMet_synthetase_sfam"/>
</dbReference>
<dbReference type="NCBIfam" id="TIGR01034">
    <property type="entry name" value="metK"/>
    <property type="match status" value="1"/>
</dbReference>
<dbReference type="PANTHER" id="PTHR11964">
    <property type="entry name" value="S-ADENOSYLMETHIONINE SYNTHETASE"/>
    <property type="match status" value="1"/>
</dbReference>
<dbReference type="Pfam" id="PF02773">
    <property type="entry name" value="S-AdoMet_synt_C"/>
    <property type="match status" value="1"/>
</dbReference>
<dbReference type="Pfam" id="PF02772">
    <property type="entry name" value="S-AdoMet_synt_M"/>
    <property type="match status" value="1"/>
</dbReference>
<dbReference type="Pfam" id="PF00438">
    <property type="entry name" value="S-AdoMet_synt_N"/>
    <property type="match status" value="1"/>
</dbReference>
<dbReference type="PIRSF" id="PIRSF000497">
    <property type="entry name" value="MAT"/>
    <property type="match status" value="1"/>
</dbReference>
<dbReference type="SUPFAM" id="SSF55973">
    <property type="entry name" value="S-adenosylmethionine synthetase"/>
    <property type="match status" value="3"/>
</dbReference>
<dbReference type="PROSITE" id="PS00376">
    <property type="entry name" value="ADOMET_SYNTHASE_1"/>
    <property type="match status" value="1"/>
</dbReference>
<dbReference type="PROSITE" id="PS00377">
    <property type="entry name" value="ADOMET_SYNTHASE_2"/>
    <property type="match status" value="1"/>
</dbReference>
<keyword id="KW-0067">ATP-binding</keyword>
<keyword id="KW-0963">Cytoplasm</keyword>
<keyword id="KW-0460">Magnesium</keyword>
<keyword id="KW-0479">Metal-binding</keyword>
<keyword id="KW-0547">Nucleotide-binding</keyword>
<keyword id="KW-0554">One-carbon metabolism</keyword>
<keyword id="KW-0630">Potassium</keyword>
<keyword id="KW-1185">Reference proteome</keyword>
<keyword id="KW-0808">Transferase</keyword>
<proteinExistence type="inferred from homology"/>
<evidence type="ECO:0000255" key="1">
    <source>
        <dbReference type="HAMAP-Rule" id="MF_00086"/>
    </source>
</evidence>
<comment type="function">
    <text evidence="1">Catalyzes the formation of S-adenosylmethionine (AdoMet) from methionine and ATP. The overall synthetic reaction is composed of two sequential steps, AdoMet formation and the subsequent tripolyphosphate hydrolysis which occurs prior to release of AdoMet from the enzyme.</text>
</comment>
<comment type="catalytic activity">
    <reaction evidence="1">
        <text>L-methionine + ATP + H2O = S-adenosyl-L-methionine + phosphate + diphosphate</text>
        <dbReference type="Rhea" id="RHEA:21080"/>
        <dbReference type="ChEBI" id="CHEBI:15377"/>
        <dbReference type="ChEBI" id="CHEBI:30616"/>
        <dbReference type="ChEBI" id="CHEBI:33019"/>
        <dbReference type="ChEBI" id="CHEBI:43474"/>
        <dbReference type="ChEBI" id="CHEBI:57844"/>
        <dbReference type="ChEBI" id="CHEBI:59789"/>
        <dbReference type="EC" id="2.5.1.6"/>
    </reaction>
</comment>
<comment type="cofactor">
    <cofactor evidence="1">
        <name>Mg(2+)</name>
        <dbReference type="ChEBI" id="CHEBI:18420"/>
    </cofactor>
    <text evidence="1">Binds 2 divalent ions per subunit.</text>
</comment>
<comment type="cofactor">
    <cofactor evidence="1">
        <name>K(+)</name>
        <dbReference type="ChEBI" id="CHEBI:29103"/>
    </cofactor>
    <text evidence="1">Binds 1 potassium ion per subunit.</text>
</comment>
<comment type="pathway">
    <text evidence="1">Amino-acid biosynthesis; S-adenosyl-L-methionine biosynthesis; S-adenosyl-L-methionine from L-methionine: step 1/1.</text>
</comment>
<comment type="subunit">
    <text evidence="1">Homotetramer; dimer of dimers.</text>
</comment>
<comment type="subcellular location">
    <subcellularLocation>
        <location evidence="1">Cytoplasm</location>
    </subcellularLocation>
</comment>
<comment type="similarity">
    <text evidence="1">Belongs to the AdoMet synthase family.</text>
</comment>
<accession>Q5NQV7</accession>
<organism>
    <name type="scientific">Zymomonas mobilis subsp. mobilis (strain ATCC 31821 / ZM4 / CP4)</name>
    <dbReference type="NCBI Taxonomy" id="264203"/>
    <lineage>
        <taxon>Bacteria</taxon>
        <taxon>Pseudomonadati</taxon>
        <taxon>Pseudomonadota</taxon>
        <taxon>Alphaproteobacteria</taxon>
        <taxon>Sphingomonadales</taxon>
        <taxon>Zymomonadaceae</taxon>
        <taxon>Zymomonas</taxon>
    </lineage>
</organism>
<name>METK_ZYMMO</name>
<reference key="1">
    <citation type="journal article" date="2005" name="Nat. Biotechnol.">
        <title>The genome sequence of the ethanologenic bacterium Zymomonas mobilis ZM4.</title>
        <authorList>
            <person name="Seo J.-S."/>
            <person name="Chong H."/>
            <person name="Park H.S."/>
            <person name="Yoon K.-O."/>
            <person name="Jung C."/>
            <person name="Kim J.J."/>
            <person name="Hong J.H."/>
            <person name="Kim H."/>
            <person name="Kim J.-H."/>
            <person name="Kil J.-I."/>
            <person name="Park C.J."/>
            <person name="Oh H.-M."/>
            <person name="Lee J.-S."/>
            <person name="Jin S.-J."/>
            <person name="Um H.-W."/>
            <person name="Lee H.-J."/>
            <person name="Oh S.-J."/>
            <person name="Kim J.Y."/>
            <person name="Kang H.L."/>
            <person name="Lee S.Y."/>
            <person name="Lee K.J."/>
            <person name="Kang H.S."/>
        </authorList>
    </citation>
    <scope>NUCLEOTIDE SEQUENCE [LARGE SCALE GENOMIC DNA]</scope>
    <source>
        <strain>ATCC 31821 / ZM4 / CP4</strain>
    </source>
</reference>